<name>HDA_SHIDS</name>
<gene>
    <name evidence="2" type="primary">hda</name>
    <name type="ordered locus">SDY_2685</name>
</gene>
<accession>Q32D72</accession>
<feature type="chain" id="PRO_1000065567" description="DnaA regulatory inactivator Hda">
    <location>
        <begin position="1"/>
        <end position="233"/>
    </location>
</feature>
<proteinExistence type="inferred from homology"/>
<keyword id="KW-0235">DNA replication</keyword>
<keyword id="KW-0236">DNA replication inhibitor</keyword>
<keyword id="KW-1185">Reference proteome</keyword>
<protein>
    <recommendedName>
        <fullName evidence="2">DnaA regulatory inactivator Hda</fullName>
    </recommendedName>
</protein>
<comment type="function">
    <text evidence="1">Mediates the interaction of DNA replication initiator protein DnaA with DNA polymerase subunit beta sliding clamp (dnaN). Stimulates hydrolysis of ATP-DnaA to ADP-DnaA, rendering DnaA inactive for reinitiation, a process called regulatory inhibition of DnaA or RIDA (By similarity).</text>
</comment>
<comment type="subunit">
    <text evidence="2">The active form seems to be an ADP-bound monomer. Forms the RIDA complex (regulatory inactivation of DnaA) of ATP-DnaA, ADP-Hda and the DNA-loaded beta sliding clamp (dnaN).</text>
</comment>
<comment type="similarity">
    <text evidence="2">Belongs to the DnaA family. HdA subfamily.</text>
</comment>
<comment type="sequence caution" evidence="3">
    <conflict type="erroneous initiation">
        <sequence resource="EMBL-CDS" id="ABB62733"/>
    </conflict>
</comment>
<organism>
    <name type="scientific">Shigella dysenteriae serotype 1 (strain Sd197)</name>
    <dbReference type="NCBI Taxonomy" id="300267"/>
    <lineage>
        <taxon>Bacteria</taxon>
        <taxon>Pseudomonadati</taxon>
        <taxon>Pseudomonadota</taxon>
        <taxon>Gammaproteobacteria</taxon>
        <taxon>Enterobacterales</taxon>
        <taxon>Enterobacteriaceae</taxon>
        <taxon>Shigella</taxon>
    </lineage>
</organism>
<sequence>MNTPAQLSLPLYLPDDETFASFWPGDNSSLLAALQNVLRQEHSGYIYLWAREGAGRSHLLHAACAELSQRGDAVGYVPLDKRTWFVPEVLDGMEHLSLVCIDNIECIAGDELWEMAIFDLYNRILESGKTRLLITGDRPPRQLNLGLPDLASRLDWGQIYKLQPLSDEDKLQALQLRARLRGFELPEDVGRFLLKRLDREMRTLFMTLDQLDRASITAQRKLTIPFVKEILKL</sequence>
<dbReference type="EMBL" id="CP000034">
    <property type="protein sequence ID" value="ABB62733.1"/>
    <property type="status" value="ALT_INIT"/>
    <property type="molecule type" value="Genomic_DNA"/>
</dbReference>
<dbReference type="RefSeq" id="WP_001307333.1">
    <property type="nucleotide sequence ID" value="NC_007606.1"/>
</dbReference>
<dbReference type="RefSeq" id="YP_404224.1">
    <property type="nucleotide sequence ID" value="NC_007606.1"/>
</dbReference>
<dbReference type="SMR" id="Q32D72"/>
<dbReference type="STRING" id="300267.SDY_2685"/>
<dbReference type="EnsemblBacteria" id="ABB62733">
    <property type="protein sequence ID" value="ABB62733"/>
    <property type="gene ID" value="SDY_2685"/>
</dbReference>
<dbReference type="KEGG" id="sdy:SDY_2685"/>
<dbReference type="PATRIC" id="fig|300267.13.peg.3239"/>
<dbReference type="HOGENOM" id="CLU_072265_1_1_6"/>
<dbReference type="Proteomes" id="UP000002716">
    <property type="component" value="Chromosome"/>
</dbReference>
<dbReference type="GO" id="GO:0006270">
    <property type="term" value="P:DNA replication initiation"/>
    <property type="evidence" value="ECO:0007669"/>
    <property type="project" value="TreeGrafter"/>
</dbReference>
<dbReference type="GO" id="GO:0032297">
    <property type="term" value="P:negative regulation of DNA-templated DNA replication initiation"/>
    <property type="evidence" value="ECO:0007669"/>
    <property type="project" value="InterPro"/>
</dbReference>
<dbReference type="FunFam" id="1.10.8.60:FF:000024">
    <property type="entry name" value="DnaA regulatory inactivator Hda"/>
    <property type="match status" value="1"/>
</dbReference>
<dbReference type="FunFam" id="3.40.50.300:FF:000452">
    <property type="entry name" value="DnaA regulatory inactivator Hda"/>
    <property type="match status" value="1"/>
</dbReference>
<dbReference type="Gene3D" id="1.10.8.60">
    <property type="match status" value="1"/>
</dbReference>
<dbReference type="Gene3D" id="3.40.50.300">
    <property type="entry name" value="P-loop containing nucleotide triphosphate hydrolases"/>
    <property type="match status" value="1"/>
</dbReference>
<dbReference type="HAMAP" id="MF_01158">
    <property type="entry name" value="Hda"/>
    <property type="match status" value="1"/>
</dbReference>
<dbReference type="InterPro" id="IPR020591">
    <property type="entry name" value="Chromosome_initiator_DnaA-like"/>
</dbReference>
<dbReference type="InterPro" id="IPR013317">
    <property type="entry name" value="DnaA_dom"/>
</dbReference>
<dbReference type="InterPro" id="IPR017788">
    <property type="entry name" value="Hda"/>
</dbReference>
<dbReference type="InterPro" id="IPR022864">
    <property type="entry name" value="Hda_Enterobact"/>
</dbReference>
<dbReference type="InterPro" id="IPR055199">
    <property type="entry name" value="Hda_lid"/>
</dbReference>
<dbReference type="InterPro" id="IPR027417">
    <property type="entry name" value="P-loop_NTPase"/>
</dbReference>
<dbReference type="NCBIfam" id="TIGR03420">
    <property type="entry name" value="DnaA_homol_Hda"/>
    <property type="match status" value="1"/>
</dbReference>
<dbReference type="NCBIfam" id="NF005982">
    <property type="entry name" value="PRK08084.1"/>
    <property type="match status" value="1"/>
</dbReference>
<dbReference type="PANTHER" id="PTHR30050">
    <property type="entry name" value="CHROMOSOMAL REPLICATION INITIATOR PROTEIN DNAA"/>
    <property type="match status" value="1"/>
</dbReference>
<dbReference type="PANTHER" id="PTHR30050:SF5">
    <property type="entry name" value="DNAA REGULATORY INACTIVATOR HDA"/>
    <property type="match status" value="1"/>
</dbReference>
<dbReference type="Pfam" id="PF00308">
    <property type="entry name" value="Bac_DnaA"/>
    <property type="match status" value="1"/>
</dbReference>
<dbReference type="Pfam" id="PF22688">
    <property type="entry name" value="Hda_lid"/>
    <property type="match status" value="1"/>
</dbReference>
<dbReference type="PRINTS" id="PR00051">
    <property type="entry name" value="DNAA"/>
</dbReference>
<dbReference type="SUPFAM" id="SSF52540">
    <property type="entry name" value="P-loop containing nucleoside triphosphate hydrolases"/>
    <property type="match status" value="1"/>
</dbReference>
<reference key="1">
    <citation type="journal article" date="2005" name="Nucleic Acids Res.">
        <title>Genome dynamics and diversity of Shigella species, the etiologic agents of bacillary dysentery.</title>
        <authorList>
            <person name="Yang F."/>
            <person name="Yang J."/>
            <person name="Zhang X."/>
            <person name="Chen L."/>
            <person name="Jiang Y."/>
            <person name="Yan Y."/>
            <person name="Tang X."/>
            <person name="Wang J."/>
            <person name="Xiong Z."/>
            <person name="Dong J."/>
            <person name="Xue Y."/>
            <person name="Zhu Y."/>
            <person name="Xu X."/>
            <person name="Sun L."/>
            <person name="Chen S."/>
            <person name="Nie H."/>
            <person name="Peng J."/>
            <person name="Xu J."/>
            <person name="Wang Y."/>
            <person name="Yuan Z."/>
            <person name="Wen Y."/>
            <person name="Yao Z."/>
            <person name="Shen Y."/>
            <person name="Qiang B."/>
            <person name="Hou Y."/>
            <person name="Yu J."/>
            <person name="Jin Q."/>
        </authorList>
    </citation>
    <scope>NUCLEOTIDE SEQUENCE [LARGE SCALE GENOMIC DNA]</scope>
    <source>
        <strain>Sd197</strain>
    </source>
</reference>
<evidence type="ECO:0000250" key="1"/>
<evidence type="ECO:0000255" key="2">
    <source>
        <dbReference type="HAMAP-Rule" id="MF_01158"/>
    </source>
</evidence>
<evidence type="ECO:0000305" key="3"/>